<name>KRT81_HUMAN</name>
<keyword id="KW-0175">Coiled coil</keyword>
<keyword id="KW-0225">Disease variant</keyword>
<keyword id="KW-0403">Intermediate filament</keyword>
<keyword id="KW-1017">Isopeptide bond</keyword>
<keyword id="KW-0416">Keratin</keyword>
<keyword id="KW-1267">Proteomics identification</keyword>
<keyword id="KW-1185">Reference proteome</keyword>
<keyword id="KW-0832">Ubl conjugation</keyword>
<organism>
    <name type="scientific">Homo sapiens</name>
    <name type="common">Human</name>
    <dbReference type="NCBI Taxonomy" id="9606"/>
    <lineage>
        <taxon>Eukaryota</taxon>
        <taxon>Metazoa</taxon>
        <taxon>Chordata</taxon>
        <taxon>Craniata</taxon>
        <taxon>Vertebrata</taxon>
        <taxon>Euteleostomi</taxon>
        <taxon>Mammalia</taxon>
        <taxon>Eutheria</taxon>
        <taxon>Euarchontoglires</taxon>
        <taxon>Primates</taxon>
        <taxon>Haplorrhini</taxon>
        <taxon>Catarrhini</taxon>
        <taxon>Hominidae</taxon>
        <taxon>Homo</taxon>
    </lineage>
</organism>
<dbReference type="EMBL" id="Y13621">
    <property type="protein sequence ID" value="CAA73943.1"/>
    <property type="molecule type" value="Genomic_DNA"/>
</dbReference>
<dbReference type="EMBL" id="AC121757">
    <property type="status" value="NOT_ANNOTATED_CDS"/>
    <property type="molecule type" value="Genomic_DNA"/>
</dbReference>
<dbReference type="EMBL" id="BC006452">
    <property type="protein sequence ID" value="AAH06452.1"/>
    <property type="molecule type" value="mRNA"/>
</dbReference>
<dbReference type="EMBL" id="BC021241">
    <property type="protein sequence ID" value="AAH21241.1"/>
    <property type="molecule type" value="mRNA"/>
</dbReference>
<dbReference type="EMBL" id="BC117465">
    <property type="protein sequence ID" value="AAI17466.1"/>
    <property type="molecule type" value="mRNA"/>
</dbReference>
<dbReference type="EMBL" id="BC117467">
    <property type="protein sequence ID" value="AAI17468.1"/>
    <property type="molecule type" value="mRNA"/>
</dbReference>
<dbReference type="EMBL" id="X81420">
    <property type="protein sequence ID" value="CAA57180.1"/>
    <property type="molecule type" value="mRNA"/>
</dbReference>
<dbReference type="EMBL" id="X80197">
    <property type="protein sequence ID" value="CAA56488.1"/>
    <property type="molecule type" value="mRNA"/>
</dbReference>
<dbReference type="EMBL" id="S75796">
    <property type="protein sequence ID" value="AAB32813.1"/>
    <property type="molecule type" value="Genomic_DNA"/>
</dbReference>
<dbReference type="CCDS" id="CCDS31805.1"/>
<dbReference type="PIR" id="I38025">
    <property type="entry name" value="I38025"/>
</dbReference>
<dbReference type="RefSeq" id="NP_002272.2">
    <property type="nucleotide sequence ID" value="NM_002281.4"/>
</dbReference>
<dbReference type="SMR" id="Q14533"/>
<dbReference type="BioGRID" id="110085">
    <property type="interactions" value="76"/>
</dbReference>
<dbReference type="FunCoup" id="Q14533">
    <property type="interactions" value="91"/>
</dbReference>
<dbReference type="IntAct" id="Q14533">
    <property type="interactions" value="49"/>
</dbReference>
<dbReference type="MINT" id="Q14533"/>
<dbReference type="STRING" id="9606.ENSP00000369349"/>
<dbReference type="ChEMBL" id="CHEMBL4523292"/>
<dbReference type="iPTMnet" id="Q14533"/>
<dbReference type="PhosphoSitePlus" id="Q14533"/>
<dbReference type="SwissPalm" id="Q14533"/>
<dbReference type="BioMuta" id="KRT81"/>
<dbReference type="DMDM" id="311033435"/>
<dbReference type="jPOST" id="Q14533"/>
<dbReference type="MassIVE" id="Q14533"/>
<dbReference type="PaxDb" id="9606-ENSP00000369349"/>
<dbReference type="PeptideAtlas" id="Q14533"/>
<dbReference type="ProteomicsDB" id="60033"/>
<dbReference type="Antibodypedia" id="26561">
    <property type="antibodies" value="214 antibodies from 28 providers"/>
</dbReference>
<dbReference type="DNASU" id="3887"/>
<dbReference type="Ensembl" id="ENST00000327741.9">
    <property type="protein sequence ID" value="ENSP00000369349.4"/>
    <property type="gene ID" value="ENSG00000205426.11"/>
</dbReference>
<dbReference type="GeneID" id="3887"/>
<dbReference type="KEGG" id="hsa:3887"/>
<dbReference type="MANE-Select" id="ENST00000327741.9">
    <property type="protein sequence ID" value="ENSP00000369349.4"/>
    <property type="RefSeq nucleotide sequence ID" value="NM_002281.4"/>
    <property type="RefSeq protein sequence ID" value="NP_002272.2"/>
</dbReference>
<dbReference type="UCSC" id="uc001sab.4">
    <property type="organism name" value="human"/>
</dbReference>
<dbReference type="AGR" id="HGNC:6458"/>
<dbReference type="CTD" id="3887"/>
<dbReference type="DisGeNET" id="3887"/>
<dbReference type="GeneCards" id="KRT81"/>
<dbReference type="HGNC" id="HGNC:6458">
    <property type="gene designation" value="KRT81"/>
</dbReference>
<dbReference type="HPA" id="ENSG00000205426">
    <property type="expression patterns" value="Tissue enriched (skin)"/>
</dbReference>
<dbReference type="MalaCards" id="KRT81"/>
<dbReference type="MIM" id="158000">
    <property type="type" value="phenotype"/>
</dbReference>
<dbReference type="MIM" id="602153">
    <property type="type" value="gene"/>
</dbReference>
<dbReference type="neXtProt" id="NX_Q14533"/>
<dbReference type="OpenTargets" id="ENSG00000205426"/>
<dbReference type="Orphanet" id="573">
    <property type="disease" value="Monilethrix"/>
</dbReference>
<dbReference type="PharmGKB" id="PA30247"/>
<dbReference type="VEuPathDB" id="HostDB:ENSG00000205426"/>
<dbReference type="eggNOG" id="ENOG502SKJW">
    <property type="taxonomic scope" value="Eukaryota"/>
</dbReference>
<dbReference type="GeneTree" id="ENSGT00940000161838"/>
<dbReference type="InParanoid" id="Q14533"/>
<dbReference type="OMA" id="IGSACNA"/>
<dbReference type="OrthoDB" id="2441647at2759"/>
<dbReference type="PAN-GO" id="Q14533">
    <property type="GO annotations" value="4 GO annotations based on evolutionary models"/>
</dbReference>
<dbReference type="PhylomeDB" id="Q14533"/>
<dbReference type="TreeFam" id="TF317854"/>
<dbReference type="PathwayCommons" id="Q14533"/>
<dbReference type="Reactome" id="R-HSA-6805567">
    <property type="pathway name" value="Keratinization"/>
</dbReference>
<dbReference type="Reactome" id="R-HSA-6809371">
    <property type="pathway name" value="Formation of the cornified envelope"/>
</dbReference>
<dbReference type="SignaLink" id="Q14533"/>
<dbReference type="BioGRID-ORCS" id="3887">
    <property type="hits" value="61 hits in 1129 CRISPR screens"/>
</dbReference>
<dbReference type="GeneWiki" id="KRT81"/>
<dbReference type="GenomeRNAi" id="3887"/>
<dbReference type="Pharos" id="Q14533">
    <property type="development level" value="Tbio"/>
</dbReference>
<dbReference type="PRO" id="PR:Q14533"/>
<dbReference type="Proteomes" id="UP000005640">
    <property type="component" value="Chromosome 12"/>
</dbReference>
<dbReference type="RNAct" id="Q14533">
    <property type="molecule type" value="protein"/>
</dbReference>
<dbReference type="Bgee" id="ENSG00000205426">
    <property type="expression patterns" value="Expressed in male germ line stem cell (sensu Vertebrata) in testis and 114 other cell types or tissues"/>
</dbReference>
<dbReference type="ExpressionAtlas" id="Q14533">
    <property type="expression patterns" value="baseline and differential"/>
</dbReference>
<dbReference type="GO" id="GO:0005829">
    <property type="term" value="C:cytosol"/>
    <property type="evidence" value="ECO:0000304"/>
    <property type="project" value="Reactome"/>
</dbReference>
<dbReference type="GO" id="GO:0005615">
    <property type="term" value="C:extracellular space"/>
    <property type="evidence" value="ECO:0007005"/>
    <property type="project" value="UniProtKB"/>
</dbReference>
<dbReference type="GO" id="GO:0045095">
    <property type="term" value="C:keratin filament"/>
    <property type="evidence" value="ECO:0000318"/>
    <property type="project" value="GO_Central"/>
</dbReference>
<dbReference type="GO" id="GO:0030280">
    <property type="term" value="F:structural constituent of skin epidermis"/>
    <property type="evidence" value="ECO:0000318"/>
    <property type="project" value="GO_Central"/>
</dbReference>
<dbReference type="GO" id="GO:0045109">
    <property type="term" value="P:intermediate filament organization"/>
    <property type="evidence" value="ECO:0000318"/>
    <property type="project" value="GO_Central"/>
</dbReference>
<dbReference type="GO" id="GO:0031424">
    <property type="term" value="P:keratinization"/>
    <property type="evidence" value="ECO:0000318"/>
    <property type="project" value="GO_Central"/>
</dbReference>
<dbReference type="FunFam" id="1.20.5.170:FF:000004">
    <property type="entry name" value="Keratin, type II cytoskeletal 5"/>
    <property type="match status" value="1"/>
</dbReference>
<dbReference type="FunFam" id="1.20.5.1160:FF:000024">
    <property type="entry name" value="Putative keratin-87 protein"/>
    <property type="match status" value="1"/>
</dbReference>
<dbReference type="FunFam" id="1.20.5.500:FF:000001">
    <property type="entry name" value="Type II keratin 23"/>
    <property type="match status" value="1"/>
</dbReference>
<dbReference type="Gene3D" id="1.20.5.170">
    <property type="match status" value="1"/>
</dbReference>
<dbReference type="Gene3D" id="1.20.5.500">
    <property type="entry name" value="Single helix bin"/>
    <property type="match status" value="1"/>
</dbReference>
<dbReference type="Gene3D" id="1.20.5.1160">
    <property type="entry name" value="Vasodilator-stimulated phosphoprotein"/>
    <property type="match status" value="1"/>
</dbReference>
<dbReference type="InterPro" id="IPR018039">
    <property type="entry name" value="IF_conserved"/>
</dbReference>
<dbReference type="InterPro" id="IPR039008">
    <property type="entry name" value="IF_rod_dom"/>
</dbReference>
<dbReference type="InterPro" id="IPR032444">
    <property type="entry name" value="Keratin_2_head"/>
</dbReference>
<dbReference type="InterPro" id="IPR003054">
    <property type="entry name" value="Keratin_II"/>
</dbReference>
<dbReference type="PANTHER" id="PTHR45616">
    <property type="entry name" value="GATA-TYPE DOMAIN-CONTAINING PROTEIN"/>
    <property type="match status" value="1"/>
</dbReference>
<dbReference type="PANTHER" id="PTHR45616:SF64">
    <property type="entry name" value="KERATIN, TYPE II CUTICULAR HB1"/>
    <property type="match status" value="1"/>
</dbReference>
<dbReference type="Pfam" id="PF00038">
    <property type="entry name" value="Filament"/>
    <property type="match status" value="1"/>
</dbReference>
<dbReference type="Pfam" id="PF16208">
    <property type="entry name" value="Keratin_2_head"/>
    <property type="match status" value="1"/>
</dbReference>
<dbReference type="PRINTS" id="PR01276">
    <property type="entry name" value="TYPE2KERATIN"/>
</dbReference>
<dbReference type="SMART" id="SM01391">
    <property type="entry name" value="Filament"/>
    <property type="match status" value="1"/>
</dbReference>
<dbReference type="SUPFAM" id="SSF64593">
    <property type="entry name" value="Intermediate filament protein, coiled coil region"/>
    <property type="match status" value="2"/>
</dbReference>
<dbReference type="PROSITE" id="PS00226">
    <property type="entry name" value="IF_ROD_1"/>
    <property type="match status" value="1"/>
</dbReference>
<dbReference type="PROSITE" id="PS51842">
    <property type="entry name" value="IF_ROD_2"/>
    <property type="match status" value="1"/>
</dbReference>
<evidence type="ECO:0000250" key="1">
    <source>
        <dbReference type="UniProtKB" id="P78386"/>
    </source>
</evidence>
<evidence type="ECO:0000255" key="2">
    <source>
        <dbReference type="PROSITE-ProRule" id="PRU01188"/>
    </source>
</evidence>
<evidence type="ECO:0000269" key="3">
    <source>
    </source>
</evidence>
<evidence type="ECO:0000269" key="4">
    <source>
    </source>
</evidence>
<evidence type="ECO:0000269" key="5">
    <source>
    </source>
</evidence>
<evidence type="ECO:0000269" key="6">
    <source>
    </source>
</evidence>
<evidence type="ECO:0000269" key="7">
    <source>
    </source>
</evidence>
<evidence type="ECO:0000269" key="8">
    <source>
    </source>
</evidence>
<evidence type="ECO:0000269" key="9">
    <source>
    </source>
</evidence>
<evidence type="ECO:0000269" key="10">
    <source>
    </source>
</evidence>
<evidence type="ECO:0000305" key="11"/>
<feature type="chain" id="PRO_0000063696" description="Keratin, type II cuticular Hb1">
    <location>
        <begin position="1"/>
        <end position="505"/>
    </location>
</feature>
<feature type="domain" description="IF rod" evidence="2">
    <location>
        <begin position="106"/>
        <end position="417"/>
    </location>
</feature>
<feature type="region of interest" description="Head">
    <location>
        <begin position="1"/>
        <end position="106"/>
    </location>
</feature>
<feature type="region of interest" description="Coil 1A">
    <location>
        <begin position="107"/>
        <end position="141"/>
    </location>
</feature>
<feature type="region of interest" description="Linker 1">
    <location>
        <begin position="142"/>
        <end position="151"/>
    </location>
</feature>
<feature type="region of interest" description="Coil 1B">
    <location>
        <begin position="152"/>
        <end position="252"/>
    </location>
</feature>
<feature type="region of interest" description="Linker 12">
    <location>
        <begin position="253"/>
        <end position="269"/>
    </location>
</feature>
<feature type="region of interest" description="Coil 2">
    <location>
        <begin position="270"/>
        <end position="413"/>
    </location>
</feature>
<feature type="region of interest" description="Tail">
    <location>
        <begin position="414"/>
        <end position="505"/>
    </location>
</feature>
<feature type="cross-link" description="Glycyl lysine isopeptide (Lys-Gly) (interchain with G-Cter in SUMO1)" evidence="1">
    <location>
        <position position="212"/>
    </location>
</feature>
<feature type="sequence variant" id="VAR_018113" description="In dbSNP:rs2071588.">
    <original>G</original>
    <variation>R</variation>
    <location>
        <position position="52"/>
    </location>
</feature>
<feature type="sequence variant" id="VAR_018114" description="In dbSNP:rs6580873." evidence="3 7 9">
    <original>L</original>
    <variation>R</variation>
    <location>
        <position position="248"/>
    </location>
</feature>
<feature type="sequence variant" id="VAR_018115" description="In dbSNP:rs4761786.">
    <original>R</original>
    <variation>C</variation>
    <location>
        <position position="316"/>
    </location>
</feature>
<feature type="sequence variant" id="VAR_018116" description="In MNLIX; dbSNP:rs56821304." evidence="10">
    <original>E</original>
    <variation>K</variation>
    <location>
        <position position="402"/>
    </location>
</feature>
<feature type="sequence variant" id="VAR_073048" description="In MNLIX; dbSNP:rs771393943." evidence="4">
    <original>R</original>
    <variation>C</variation>
    <location>
        <position position="408"/>
    </location>
</feature>
<feature type="sequence variant" id="VAR_018117" description="In MNLIX; dbSNP:rs57419521." evidence="8">
    <original>E</original>
    <variation>K</variation>
    <location>
        <position position="413"/>
    </location>
</feature>
<feature type="sequence conflict" description="In Ref. 3; AAI17468/AAI17466." evidence="11" ref="3">
    <original>Q</original>
    <variation>P</variation>
    <location>
        <position position="139"/>
    </location>
</feature>
<accession>Q14533</accession>
<accession>Q14846</accession>
<accession>Q16274</accession>
<accession>Q17R48</accession>
<accession>Q8WU52</accession>
<accession>Q9BR74</accession>
<reference key="1">
    <citation type="journal article" date="1998" name="J. Invest. Dermatol.">
        <title>Characterization and chromosomal localization of human hair-specific keratin genes and comparative expression during the hair growth cycle.</title>
        <authorList>
            <person name="Bowden P.E."/>
            <person name="Hainey S.D."/>
            <person name="Parker G."/>
            <person name="Jones D.O."/>
            <person name="Zimonjic D."/>
            <person name="Popescu N."/>
            <person name="Hodgins M.B."/>
        </authorList>
    </citation>
    <scope>NUCLEOTIDE SEQUENCE [GENOMIC DNA]</scope>
    <scope>TISSUE SPECIFICITY</scope>
    <scope>VARIANT ARG-248</scope>
    <source>
        <tissue>Scalp</tissue>
    </source>
</reference>
<reference key="2">
    <citation type="journal article" date="2006" name="Nature">
        <title>The finished DNA sequence of human chromosome 12.</title>
        <authorList>
            <person name="Scherer S.E."/>
            <person name="Muzny D.M."/>
            <person name="Buhay C.J."/>
            <person name="Chen R."/>
            <person name="Cree A."/>
            <person name="Ding Y."/>
            <person name="Dugan-Rocha S."/>
            <person name="Gill R."/>
            <person name="Gunaratne P."/>
            <person name="Harris R.A."/>
            <person name="Hawes A.C."/>
            <person name="Hernandez J."/>
            <person name="Hodgson A.V."/>
            <person name="Hume J."/>
            <person name="Jackson A."/>
            <person name="Khan Z.M."/>
            <person name="Kovar-Smith C."/>
            <person name="Lewis L.R."/>
            <person name="Lozado R.J."/>
            <person name="Metzker M.L."/>
            <person name="Milosavljevic A."/>
            <person name="Miner G.R."/>
            <person name="Montgomery K.T."/>
            <person name="Morgan M.B."/>
            <person name="Nazareth L.V."/>
            <person name="Scott G."/>
            <person name="Sodergren E."/>
            <person name="Song X.-Z."/>
            <person name="Steffen D."/>
            <person name="Lovering R.C."/>
            <person name="Wheeler D.A."/>
            <person name="Worley K.C."/>
            <person name="Yuan Y."/>
            <person name="Zhang Z."/>
            <person name="Adams C.Q."/>
            <person name="Ansari-Lari M.A."/>
            <person name="Ayele M."/>
            <person name="Brown M.J."/>
            <person name="Chen G."/>
            <person name="Chen Z."/>
            <person name="Clerc-Blankenburg K.P."/>
            <person name="Davis C."/>
            <person name="Delgado O."/>
            <person name="Dinh H.H."/>
            <person name="Draper H."/>
            <person name="Gonzalez-Garay M.L."/>
            <person name="Havlak P."/>
            <person name="Jackson L.R."/>
            <person name="Jacob L.S."/>
            <person name="Kelly S.H."/>
            <person name="Li L."/>
            <person name="Li Z."/>
            <person name="Liu J."/>
            <person name="Liu W."/>
            <person name="Lu J."/>
            <person name="Maheshwari M."/>
            <person name="Nguyen B.-V."/>
            <person name="Okwuonu G.O."/>
            <person name="Pasternak S."/>
            <person name="Perez L.M."/>
            <person name="Plopper F.J.H."/>
            <person name="Santibanez J."/>
            <person name="Shen H."/>
            <person name="Tabor P.E."/>
            <person name="Verduzco D."/>
            <person name="Waldron L."/>
            <person name="Wang Q."/>
            <person name="Williams G.A."/>
            <person name="Zhang J."/>
            <person name="Zhou J."/>
            <person name="Allen C.C."/>
            <person name="Amin A.G."/>
            <person name="Anyalebechi V."/>
            <person name="Bailey M."/>
            <person name="Barbaria J.A."/>
            <person name="Bimage K.E."/>
            <person name="Bryant N.P."/>
            <person name="Burch P.E."/>
            <person name="Burkett C.E."/>
            <person name="Burrell K.L."/>
            <person name="Calderon E."/>
            <person name="Cardenas V."/>
            <person name="Carter K."/>
            <person name="Casias K."/>
            <person name="Cavazos I."/>
            <person name="Cavazos S.R."/>
            <person name="Ceasar H."/>
            <person name="Chacko J."/>
            <person name="Chan S.N."/>
            <person name="Chavez D."/>
            <person name="Christopoulos C."/>
            <person name="Chu J."/>
            <person name="Cockrell R."/>
            <person name="Cox C.D."/>
            <person name="Dang M."/>
            <person name="Dathorne S.R."/>
            <person name="David R."/>
            <person name="Davis C.M."/>
            <person name="Davy-Carroll L."/>
            <person name="Deshazo D.R."/>
            <person name="Donlin J.E."/>
            <person name="D'Souza L."/>
            <person name="Eaves K.A."/>
            <person name="Egan A."/>
            <person name="Emery-Cohen A.J."/>
            <person name="Escotto M."/>
            <person name="Flagg N."/>
            <person name="Forbes L.D."/>
            <person name="Gabisi A.M."/>
            <person name="Garza M."/>
            <person name="Hamilton C."/>
            <person name="Henderson N."/>
            <person name="Hernandez O."/>
            <person name="Hines S."/>
            <person name="Hogues M.E."/>
            <person name="Huang M."/>
            <person name="Idlebird D.G."/>
            <person name="Johnson R."/>
            <person name="Jolivet A."/>
            <person name="Jones S."/>
            <person name="Kagan R."/>
            <person name="King L.M."/>
            <person name="Leal B."/>
            <person name="Lebow H."/>
            <person name="Lee S."/>
            <person name="LeVan J.M."/>
            <person name="Lewis L.C."/>
            <person name="London P."/>
            <person name="Lorensuhewa L.M."/>
            <person name="Loulseged H."/>
            <person name="Lovett D.A."/>
            <person name="Lucier A."/>
            <person name="Lucier R.L."/>
            <person name="Ma J."/>
            <person name="Madu R.C."/>
            <person name="Mapua P."/>
            <person name="Martindale A.D."/>
            <person name="Martinez E."/>
            <person name="Massey E."/>
            <person name="Mawhiney S."/>
            <person name="Meador M.G."/>
            <person name="Mendez S."/>
            <person name="Mercado C."/>
            <person name="Mercado I.C."/>
            <person name="Merritt C.E."/>
            <person name="Miner Z.L."/>
            <person name="Minja E."/>
            <person name="Mitchell T."/>
            <person name="Mohabbat F."/>
            <person name="Mohabbat K."/>
            <person name="Montgomery B."/>
            <person name="Moore N."/>
            <person name="Morris S."/>
            <person name="Munidasa M."/>
            <person name="Ngo R.N."/>
            <person name="Nguyen N.B."/>
            <person name="Nickerson E."/>
            <person name="Nwaokelemeh O.O."/>
            <person name="Nwokenkwo S."/>
            <person name="Obregon M."/>
            <person name="Oguh M."/>
            <person name="Oragunye N."/>
            <person name="Oviedo R.J."/>
            <person name="Parish B.J."/>
            <person name="Parker D.N."/>
            <person name="Parrish J."/>
            <person name="Parks K.L."/>
            <person name="Paul H.A."/>
            <person name="Payton B.A."/>
            <person name="Perez A."/>
            <person name="Perrin W."/>
            <person name="Pickens A."/>
            <person name="Primus E.L."/>
            <person name="Pu L.-L."/>
            <person name="Puazo M."/>
            <person name="Quiles M.M."/>
            <person name="Quiroz J.B."/>
            <person name="Rabata D."/>
            <person name="Reeves K."/>
            <person name="Ruiz S.J."/>
            <person name="Shao H."/>
            <person name="Sisson I."/>
            <person name="Sonaike T."/>
            <person name="Sorelle R.P."/>
            <person name="Sutton A.E."/>
            <person name="Svatek A.F."/>
            <person name="Svetz L.A."/>
            <person name="Tamerisa K.S."/>
            <person name="Taylor T.R."/>
            <person name="Teague B."/>
            <person name="Thomas N."/>
            <person name="Thorn R.D."/>
            <person name="Trejos Z.Y."/>
            <person name="Trevino B.K."/>
            <person name="Ukegbu O.N."/>
            <person name="Urban J.B."/>
            <person name="Vasquez L.I."/>
            <person name="Vera V.A."/>
            <person name="Villasana D.M."/>
            <person name="Wang L."/>
            <person name="Ward-Moore S."/>
            <person name="Warren J.T."/>
            <person name="Wei X."/>
            <person name="White F."/>
            <person name="Williamson A.L."/>
            <person name="Wleczyk R."/>
            <person name="Wooden H.S."/>
            <person name="Wooden S.H."/>
            <person name="Yen J."/>
            <person name="Yoon L."/>
            <person name="Yoon V."/>
            <person name="Zorrilla S.E."/>
            <person name="Nelson D."/>
            <person name="Kucherlapati R."/>
            <person name="Weinstock G."/>
            <person name="Gibbs R.A."/>
        </authorList>
    </citation>
    <scope>NUCLEOTIDE SEQUENCE [LARGE SCALE GENOMIC DNA]</scope>
</reference>
<reference key="3">
    <citation type="journal article" date="2004" name="Genome Res.">
        <title>The status, quality, and expansion of the NIH full-length cDNA project: the Mammalian Gene Collection (MGC).</title>
        <authorList>
            <consortium name="The MGC Project Team"/>
        </authorList>
    </citation>
    <scope>NUCLEOTIDE SEQUENCE [LARGE SCALE MRNA]</scope>
    <scope>VARIANT ARG-248</scope>
    <source>
        <tissue>Lung</tissue>
    </source>
</reference>
<reference key="4">
    <citation type="journal article" date="1995" name="Exp. Cell Res.">
        <title>Sequence data and chromosomal localization of human type I and type II hair keratin genes.</title>
        <authorList>
            <person name="Rogers M.A."/>
            <person name="Nischt R."/>
            <person name="Korge B."/>
            <person name="Krieg T."/>
            <person name="Fink T.M."/>
            <person name="Lichter P."/>
            <person name="Winter H."/>
            <person name="Schweizer J."/>
        </authorList>
    </citation>
    <scope>NUCLEOTIDE SEQUENCE [MRNA] OF 81-505</scope>
    <scope>VARIANT ARG-248</scope>
    <source>
        <tissue>Scalp</tissue>
    </source>
</reference>
<reference key="5">
    <citation type="journal article" date="1995" name="Genomics">
        <title>Identification of four novel human genes amplified and overexpressed in breast carcinoma and localized to the q11-q21.3 region of chromosome 17.</title>
        <authorList>
            <person name="Tomasetto C.L."/>
            <person name="Regnier C.H."/>
            <person name="Moog-Lutz C."/>
            <person name="Mattei M.-G."/>
            <person name="Chenard M.-P."/>
            <person name="Lidereau R."/>
            <person name="Basset P."/>
            <person name="Rio M.-C."/>
        </authorList>
    </citation>
    <scope>NUCLEOTIDE SEQUENCE [MRNA] OF 249-505</scope>
    <scope>TISSUE SPECIFICITY</scope>
    <source>
        <tissue>Mammary carcinoma</tissue>
    </source>
</reference>
<reference key="6">
    <citation type="journal article" date="1994" name="J. Dermatol. Sci.">
        <title>Sequence and expression of human hair keratin genes.</title>
        <authorList>
            <person name="Bowden P.E."/>
            <person name="Hainey S."/>
            <person name="Parker G."/>
            <person name="Hodgins M.B."/>
        </authorList>
    </citation>
    <scope>NUCLEOTIDE SEQUENCE [GENOMIC DNA] OF 390-470</scope>
    <scope>TISSUE SPECIFICITY</scope>
</reference>
<reference key="7">
    <citation type="journal article" date="1997" name="Hum. Genet.">
        <title>A new mutation in the type II hair cortex keratin hHb1 involved in the inherited hair disorder monilethrix.</title>
        <authorList>
            <person name="Winter H."/>
            <person name="Rogers M.A."/>
            <person name="Gebhardt M."/>
            <person name="Wollina U."/>
            <person name="Boxall L."/>
            <person name="Chitayat D."/>
            <person name="Babul-Hirji R."/>
            <person name="Stevens H.P."/>
            <person name="Zlotogorski A."/>
            <person name="Schweizer J."/>
        </authorList>
    </citation>
    <scope>VARIANT MNLIX LYS-413</scope>
</reference>
<reference key="8">
    <citation type="journal article" date="1998" name="J. Invest. Dermatol.">
        <title>A variable monilethrix phenotype associated with a novel mutation, Glu402Lys, in the helix termination motif of the type II hair keratin hHb1.</title>
        <authorList>
            <person name="Winter H."/>
            <person name="Labreze C."/>
            <person name="Chapalain V."/>
            <person name="Surleve-Bazeille J.E."/>
            <person name="Mercier M."/>
            <person name="Rogers M.A."/>
            <person name="Taieb A."/>
            <person name="Schweizer J."/>
        </authorList>
    </citation>
    <scope>VARIANT MNLIX LYS-402</scope>
</reference>
<reference key="9">
    <citation type="journal article" date="2015" name="Exp. Dermatol.">
        <title>Novel KRT83 and KRT86 mutations associated with monilethrix.</title>
        <authorList>
            <person name="van Steensel M."/>
            <person name="Vreeburg M."/>
            <person name="Urbina M.T."/>
            <person name="Lopez P."/>
            <person name="Morice-Picard F."/>
            <person name="van Geel M."/>
        </authorList>
    </citation>
    <scope>VARIANT MNLIX CYS-408</scope>
</reference>
<proteinExistence type="evidence at protein level"/>
<protein>
    <recommendedName>
        <fullName>Keratin, type II cuticular Hb1</fullName>
    </recommendedName>
    <alternativeName>
        <fullName>Hair keratin K2.9</fullName>
    </alternativeName>
    <alternativeName>
        <fullName>Keratin, hair, basic, 1</fullName>
    </alternativeName>
    <alternativeName>
        <fullName>Keratin-81</fullName>
        <shortName>K81</shortName>
    </alternativeName>
    <alternativeName>
        <fullName>Metastatic lymph node 137 gene protein</fullName>
        <shortName>MLN 137</shortName>
    </alternativeName>
    <alternativeName>
        <fullName>Type II hair keratin Hb1</fullName>
    </alternativeName>
    <alternativeName>
        <fullName>Type-II keratin Kb21</fullName>
    </alternativeName>
    <alternativeName>
        <fullName>ghHKb1</fullName>
        <shortName>ghHb1</shortName>
    </alternativeName>
</protein>
<gene>
    <name type="primary">KRT81</name>
    <name type="synonym">KRTHB1</name>
    <name type="synonym">MLN137</name>
</gene>
<sequence>MTCGSGFGGRAFSCISACGPRPGRCCITAAPYRGISCYRGLTGGFGSHSVCGGFRAGSCGRSFGYRSGGVCGPSPPCITTVSVNESLLTPLNLEIDPNAQCVKQEEKEQIKSLNSRFAAFIDKVRFLEQQNKLLETKLQFYQNRECCQSNLEPLFEGYIETLRREAECVEADSGRLASELNHVQEVLEGYKKKYEEEVSLRATAENEFVALKKDVDCAYLRKSDLEANVEALIQEIDFLRRLYEEEILILQSHISDTSVVVKLDNSRDLNMDCIIAEIKAQYDDIVTRSRAEAESWYRSKCEEMKATVIRHGETLRRTKEEINELNRMIQRLTAEVENAKCQNSKLEAAVAQSEQQGEAALSDARCKLAELEGALQKAKQDMACLIREYQEVMNSKLGLDIEIATYRRLLEGEEQRLCEGIGAVNVCVSSSRGGVVCGDLCVSGSRPVTGSVCSAPCNGNVAVSTGLCAPCGQLNTTCGGGSCGVGSCGISSLGVGSCGSSCRKC</sequence>
<comment type="subunit">
    <text>Heterotetramer of two type I and two type II keratins.</text>
</comment>
<comment type="interaction">
    <interactant intactId="EBI-739648">
        <id>Q14533</id>
    </interactant>
    <interactant intactId="EBI-11954292">
        <id>Q86V38</id>
        <label>ATN1</label>
    </interactant>
    <organismsDiffer>false</organismsDiffer>
    <experiments>3</experiments>
</comment>
<comment type="interaction">
    <interactant intactId="EBI-739648">
        <id>Q14533</id>
    </interactant>
    <interactant intactId="EBI-6875961">
        <id>P02489</id>
        <label>CRYAA</label>
    </interactant>
    <organismsDiffer>false</organismsDiffer>
    <experiments>3</experiments>
</comment>
<comment type="interaction">
    <interactant intactId="EBI-739648">
        <id>Q14533</id>
    </interactant>
    <interactant intactId="EBI-3867333">
        <id>A8MQ03</id>
        <label>CYSRT1</label>
    </interactant>
    <organismsDiffer>false</organismsDiffer>
    <experiments>3</experiments>
</comment>
<comment type="interaction">
    <interactant intactId="EBI-739648">
        <id>Q14533</id>
    </interactant>
    <interactant intactId="EBI-740785">
        <id>P49639</id>
        <label>HOXA1</label>
    </interactant>
    <organismsDiffer>false</organismsDiffer>
    <experiments>5</experiments>
</comment>
<comment type="interaction">
    <interactant intactId="EBI-739648">
        <id>Q14533</id>
    </interactant>
    <interactant intactId="EBI-2432309">
        <id>Q92876</id>
        <label>KLK6</label>
    </interactant>
    <organismsDiffer>false</organismsDiffer>
    <experiments>3</experiments>
</comment>
<comment type="interaction">
    <interactant intactId="EBI-739648">
        <id>Q14533</id>
    </interactant>
    <interactant intactId="EBI-702178">
        <id>P02533</id>
        <label>KRT14</label>
    </interactant>
    <organismsDiffer>false</organismsDiffer>
    <experiments>3</experiments>
</comment>
<comment type="interaction">
    <interactant intactId="EBI-739648">
        <id>Q14533</id>
    </interactant>
    <interactant intactId="EBI-739566">
        <id>P19012</id>
        <label>KRT15</label>
    </interactant>
    <organismsDiffer>false</organismsDiffer>
    <experiments>4</experiments>
</comment>
<comment type="interaction">
    <interactant intactId="EBI-739648">
        <id>Q14533</id>
    </interactant>
    <interactant intactId="EBI-356410">
        <id>P08779</id>
        <label>KRT16</label>
    </interactant>
    <organismsDiffer>false</organismsDiffer>
    <experiments>3</experiments>
</comment>
<comment type="interaction">
    <interactant intactId="EBI-739648">
        <id>Q14533</id>
    </interactant>
    <interactant intactId="EBI-297888">
        <id>P05783</id>
        <label>KRT18</label>
    </interactant>
    <organismsDiffer>false</organismsDiffer>
    <experiments>3</experiments>
</comment>
<comment type="interaction">
    <interactant intactId="EBI-739648">
        <id>Q14533</id>
    </interactant>
    <interactant intactId="EBI-742756">
        <id>P08727</id>
        <label>KRT19</label>
    </interactant>
    <organismsDiffer>false</organismsDiffer>
    <experiments>3</experiments>
</comment>
<comment type="interaction">
    <interactant intactId="EBI-739648">
        <id>Q14533</id>
    </interactant>
    <interactant intactId="EBI-12084444">
        <id>Q7Z3Y9</id>
        <label>KRT26</label>
    </interactant>
    <organismsDiffer>false</organismsDiffer>
    <experiments>3</experiments>
</comment>
<comment type="interaction">
    <interactant intactId="EBI-739648">
        <id>Q14533</id>
    </interactant>
    <interactant intactId="EBI-3044087">
        <id>Q7Z3Y8</id>
        <label>KRT27</label>
    </interactant>
    <organismsDiffer>false</organismsDiffer>
    <experiments>3</experiments>
</comment>
<comment type="interaction">
    <interactant intactId="EBI-739648">
        <id>Q14533</id>
    </interactant>
    <interactant intactId="EBI-11980489">
        <id>Q7Z3Y7</id>
        <label>KRT28</label>
    </interactant>
    <organismsDiffer>false</organismsDiffer>
    <experiments>3</experiments>
</comment>
<comment type="interaction">
    <interactant intactId="EBI-739648">
        <id>Q14533</id>
    </interactant>
    <interactant intactId="EBI-948001">
        <id>Q15323</id>
        <label>KRT31</label>
    </interactant>
    <organismsDiffer>false</organismsDiffer>
    <experiments>8</experiments>
</comment>
<comment type="interaction">
    <interactant intactId="EBI-739648">
        <id>Q14533</id>
    </interactant>
    <interactant intactId="EBI-1047093">
        <id>O76011</id>
        <label>KRT34</label>
    </interactant>
    <organismsDiffer>false</organismsDiffer>
    <experiments>3</experiments>
</comment>
<comment type="interaction">
    <interactant intactId="EBI-739648">
        <id>Q14533</id>
    </interactant>
    <interactant intactId="EBI-1058674">
        <id>Q92764</id>
        <label>KRT35</label>
    </interactant>
    <organismsDiffer>false</organismsDiffer>
    <experiments>3</experiments>
</comment>
<comment type="interaction">
    <interactant intactId="EBI-739648">
        <id>Q14533</id>
    </interactant>
    <interactant intactId="EBI-1045716">
        <id>O76014</id>
        <label>KRT37</label>
    </interactant>
    <organismsDiffer>false</organismsDiffer>
    <experiments>5</experiments>
</comment>
<comment type="interaction">
    <interactant intactId="EBI-739648">
        <id>Q14533</id>
    </interactant>
    <interactant intactId="EBI-1047263">
        <id>O76015</id>
        <label>KRT38</label>
    </interactant>
    <organismsDiffer>false</organismsDiffer>
    <experiments>10</experiments>
</comment>
<comment type="interaction">
    <interactant intactId="EBI-739648">
        <id>Q14533</id>
    </interactant>
    <interactant intactId="EBI-11958242">
        <id>Q6A163</id>
        <label>KRT39</label>
    </interactant>
    <organismsDiffer>false</organismsDiffer>
    <experiments>3</experiments>
</comment>
<comment type="interaction">
    <interactant intactId="EBI-739648">
        <id>Q14533</id>
    </interactant>
    <interactant intactId="EBI-10171697">
        <id>Q6A162</id>
        <label>KRT40</label>
    </interactant>
    <organismsDiffer>false</organismsDiffer>
    <experiments>8</experiments>
</comment>
<comment type="interaction">
    <interactant intactId="EBI-739648">
        <id>Q14533</id>
    </interactant>
    <interactant intactId="EBI-739657">
        <id>Q9BQD3</id>
        <label>KXD1</label>
    </interactant>
    <organismsDiffer>false</organismsDiffer>
    <experiments>2</experiments>
</comment>
<comment type="interaction">
    <interactant intactId="EBI-739648">
        <id>Q14533</id>
    </interactant>
    <interactant intactId="EBI-8473670">
        <id>O95447</id>
        <label>LCA5L</label>
    </interactant>
    <organismsDiffer>false</organismsDiffer>
    <experiments>3</experiments>
</comment>
<comment type="interaction">
    <interactant intactId="EBI-739648">
        <id>Q14533</id>
    </interactant>
    <interactant intactId="EBI-16439278">
        <id>Q6FHY5</id>
        <label>MEOX2</label>
    </interactant>
    <organismsDiffer>false</organismsDiffer>
    <experiments>3</experiments>
</comment>
<comment type="interaction">
    <interactant intactId="EBI-739648">
        <id>Q14533</id>
    </interactant>
    <interactant intactId="EBI-536879">
        <id>O43482</id>
        <label>OIP5</label>
    </interactant>
    <organismsDiffer>false</organismsDiffer>
    <experiments>5</experiments>
</comment>
<comment type="interaction">
    <interactant intactId="EBI-739648">
        <id>Q14533</id>
    </interactant>
    <interactant intactId="EBI-740446">
        <id>P32242</id>
        <label>OTX1</label>
    </interactant>
    <organismsDiffer>false</organismsDiffer>
    <experiments>8</experiments>
</comment>
<comment type="interaction">
    <interactant intactId="EBI-739648">
        <id>Q14533</id>
    </interactant>
    <interactant intactId="EBI-3957603">
        <id>P09022</id>
        <label>Hoxa1</label>
    </interactant>
    <organismsDiffer>true</organismsDiffer>
    <experiments>3</experiments>
</comment>
<comment type="tissue specificity">
    <text evidence="5 6 9">Abundantly expressed in the differentiating cortex of growing (anagen) hair. Expression is restricted to the keratinocytes of the hair cortex and is absent from inner root sheath and medulla. Expressed in malignant lymph node tissue in breast carcinoma tissue.</text>
</comment>
<comment type="disease" evidence="4 8 10">
    <disease id="DI-01992">
        <name>Monilethrix</name>
        <acronym>MNLIX</acronym>
        <description>A disorder clinically characterized by alopecia and follicular papules. Affected hairs have uniform elliptical nodes of normal thickness and intermittent constrictions, internodes at which the hair easily breaks. Usually only the scalp is involved, but in severe forms, the secondary sexual hair, eyebrows, eyelashes, and nails may also be affected.</description>
        <dbReference type="MIM" id="158000"/>
    </disease>
    <text>The disease is caused by variants affecting the gene represented in this entry.</text>
</comment>
<comment type="miscellaneous">
    <text>There are two types of hair/microfibrillar keratin, I (acidic) and II (neutral to basic).</text>
</comment>
<comment type="similarity">
    <text evidence="2">Belongs to the intermediate filament family.</text>
</comment>